<comment type="function">
    <text evidence="1">The RuvA-RuvB-RuvC complex processes Holliday junction (HJ) DNA during genetic recombination and DNA repair, while the RuvA-RuvB complex plays an important role in the rescue of blocked DNA replication forks via replication fork reversal (RFR). RuvA specifically binds to HJ cruciform DNA, conferring on it an open structure. The RuvB hexamer acts as an ATP-dependent pump, pulling dsDNA into and through the RuvAB complex. RuvB forms 2 homohexamers on either side of HJ DNA bound by 1 or 2 RuvA tetramers; 4 subunits per hexamer contact DNA at a time. Coordinated motions by a converter formed by DNA-disengaged RuvB subunits stimulates ATP hydrolysis and nucleotide exchange. Immobilization of the converter enables RuvB to convert the ATP-contained energy into a lever motion, pulling 2 nucleotides of DNA out of the RuvA tetramer per ATP hydrolyzed, thus driving DNA branch migration. The RuvB motors rotate together with the DNA substrate, which together with the progressing nucleotide cycle form the mechanistic basis for DNA recombination by continuous HJ branch migration. Branch migration allows RuvC to scan DNA until it finds its consensus sequence, where it cleaves and resolves cruciform DNA.</text>
</comment>
<comment type="catalytic activity">
    <reaction evidence="1">
        <text>ATP + H2O = ADP + phosphate + H(+)</text>
        <dbReference type="Rhea" id="RHEA:13065"/>
        <dbReference type="ChEBI" id="CHEBI:15377"/>
        <dbReference type="ChEBI" id="CHEBI:15378"/>
        <dbReference type="ChEBI" id="CHEBI:30616"/>
        <dbReference type="ChEBI" id="CHEBI:43474"/>
        <dbReference type="ChEBI" id="CHEBI:456216"/>
    </reaction>
</comment>
<comment type="subunit">
    <text evidence="1">Homohexamer. Forms an RuvA(8)-RuvB(12)-Holliday junction (HJ) complex. HJ DNA is sandwiched between 2 RuvA tetramers; dsDNA enters through RuvA and exits via RuvB. An RuvB hexamer assembles on each DNA strand where it exits the tetramer. Each RuvB hexamer is contacted by two RuvA subunits (via domain III) on 2 adjacent RuvB subunits; this complex drives branch migration. In the full resolvosome a probable DNA-RuvA(4)-RuvB(12)-RuvC(2) complex forms which resolves the HJ.</text>
</comment>
<comment type="subcellular location">
    <subcellularLocation>
        <location evidence="1">Cytoplasm</location>
    </subcellularLocation>
</comment>
<comment type="domain">
    <text evidence="1">Has 3 domains, the large (RuvB-L) and small ATPase (RuvB-S) domains and the C-terminal head (RuvB-H) domain. The head domain binds DNA, while the ATPase domains jointly bind ATP, ADP or are empty depending on the state of the subunit in the translocation cycle. During a single DNA translocation step the structure of each domain remains the same, but their relative positions change.</text>
</comment>
<comment type="similarity">
    <text evidence="1">Belongs to the RuvB family.</text>
</comment>
<accession>A1JRJ5</accession>
<evidence type="ECO:0000255" key="1">
    <source>
        <dbReference type="HAMAP-Rule" id="MF_00016"/>
    </source>
</evidence>
<protein>
    <recommendedName>
        <fullName evidence="1">Holliday junction branch migration complex subunit RuvB</fullName>
        <ecNumber evidence="1">3.6.4.-</ecNumber>
    </recommendedName>
</protein>
<reference key="1">
    <citation type="journal article" date="2006" name="PLoS Genet.">
        <title>The complete genome sequence and comparative genome analysis of the high pathogenicity Yersinia enterocolitica strain 8081.</title>
        <authorList>
            <person name="Thomson N.R."/>
            <person name="Howard S."/>
            <person name="Wren B.W."/>
            <person name="Holden M.T.G."/>
            <person name="Crossman L."/>
            <person name="Challis G.L."/>
            <person name="Churcher C."/>
            <person name="Mungall K."/>
            <person name="Brooks K."/>
            <person name="Chillingworth T."/>
            <person name="Feltwell T."/>
            <person name="Abdellah Z."/>
            <person name="Hauser H."/>
            <person name="Jagels K."/>
            <person name="Maddison M."/>
            <person name="Moule S."/>
            <person name="Sanders M."/>
            <person name="Whitehead S."/>
            <person name="Quail M.A."/>
            <person name="Dougan G."/>
            <person name="Parkhill J."/>
            <person name="Prentice M.B."/>
        </authorList>
    </citation>
    <scope>NUCLEOTIDE SEQUENCE [LARGE SCALE GENOMIC DNA]</scope>
    <source>
        <strain>NCTC 13174 / 8081</strain>
    </source>
</reference>
<name>RUVB_YERE8</name>
<dbReference type="EC" id="3.6.4.-" evidence="1"/>
<dbReference type="EMBL" id="AM286415">
    <property type="protein sequence ID" value="CAL12444.1"/>
    <property type="molecule type" value="Genomic_DNA"/>
</dbReference>
<dbReference type="RefSeq" id="WP_005163065.1">
    <property type="nucleotide sequence ID" value="NC_008800.1"/>
</dbReference>
<dbReference type="RefSeq" id="YP_001006611.1">
    <property type="nucleotide sequence ID" value="NC_008800.1"/>
</dbReference>
<dbReference type="SMR" id="A1JRJ5"/>
<dbReference type="GeneID" id="93972747"/>
<dbReference type="KEGG" id="yen:YE2392"/>
<dbReference type="PATRIC" id="fig|393305.7.peg.2546"/>
<dbReference type="eggNOG" id="COG2255">
    <property type="taxonomic scope" value="Bacteria"/>
</dbReference>
<dbReference type="HOGENOM" id="CLU_055599_1_0_6"/>
<dbReference type="OrthoDB" id="9804478at2"/>
<dbReference type="Proteomes" id="UP000000642">
    <property type="component" value="Chromosome"/>
</dbReference>
<dbReference type="GO" id="GO:0005737">
    <property type="term" value="C:cytoplasm"/>
    <property type="evidence" value="ECO:0007669"/>
    <property type="project" value="UniProtKB-SubCell"/>
</dbReference>
<dbReference type="GO" id="GO:0048476">
    <property type="term" value="C:Holliday junction resolvase complex"/>
    <property type="evidence" value="ECO:0007669"/>
    <property type="project" value="UniProtKB-UniRule"/>
</dbReference>
<dbReference type="GO" id="GO:0005524">
    <property type="term" value="F:ATP binding"/>
    <property type="evidence" value="ECO:0007669"/>
    <property type="project" value="UniProtKB-UniRule"/>
</dbReference>
<dbReference type="GO" id="GO:0016887">
    <property type="term" value="F:ATP hydrolysis activity"/>
    <property type="evidence" value="ECO:0007669"/>
    <property type="project" value="InterPro"/>
</dbReference>
<dbReference type="GO" id="GO:0000400">
    <property type="term" value="F:four-way junction DNA binding"/>
    <property type="evidence" value="ECO:0007669"/>
    <property type="project" value="UniProtKB-UniRule"/>
</dbReference>
<dbReference type="GO" id="GO:0009378">
    <property type="term" value="F:four-way junction helicase activity"/>
    <property type="evidence" value="ECO:0007669"/>
    <property type="project" value="InterPro"/>
</dbReference>
<dbReference type="GO" id="GO:0006310">
    <property type="term" value="P:DNA recombination"/>
    <property type="evidence" value="ECO:0007669"/>
    <property type="project" value="UniProtKB-UniRule"/>
</dbReference>
<dbReference type="GO" id="GO:0006281">
    <property type="term" value="P:DNA repair"/>
    <property type="evidence" value="ECO:0007669"/>
    <property type="project" value="UniProtKB-UniRule"/>
</dbReference>
<dbReference type="CDD" id="cd00009">
    <property type="entry name" value="AAA"/>
    <property type="match status" value="1"/>
</dbReference>
<dbReference type="FunFam" id="1.10.10.10:FF:000086">
    <property type="entry name" value="Holliday junction ATP-dependent DNA helicase RuvB"/>
    <property type="match status" value="1"/>
</dbReference>
<dbReference type="FunFam" id="1.10.8.60:FF:000023">
    <property type="entry name" value="Holliday junction ATP-dependent DNA helicase RuvB"/>
    <property type="match status" value="1"/>
</dbReference>
<dbReference type="FunFam" id="3.40.50.300:FF:000073">
    <property type="entry name" value="Holliday junction ATP-dependent DNA helicase RuvB"/>
    <property type="match status" value="1"/>
</dbReference>
<dbReference type="Gene3D" id="1.10.8.60">
    <property type="match status" value="1"/>
</dbReference>
<dbReference type="Gene3D" id="3.40.50.300">
    <property type="entry name" value="P-loop containing nucleotide triphosphate hydrolases"/>
    <property type="match status" value="1"/>
</dbReference>
<dbReference type="Gene3D" id="1.10.10.10">
    <property type="entry name" value="Winged helix-like DNA-binding domain superfamily/Winged helix DNA-binding domain"/>
    <property type="match status" value="1"/>
</dbReference>
<dbReference type="HAMAP" id="MF_00016">
    <property type="entry name" value="DNA_HJ_migration_RuvB"/>
    <property type="match status" value="1"/>
</dbReference>
<dbReference type="InterPro" id="IPR003593">
    <property type="entry name" value="AAA+_ATPase"/>
</dbReference>
<dbReference type="InterPro" id="IPR041445">
    <property type="entry name" value="AAA_lid_4"/>
</dbReference>
<dbReference type="InterPro" id="IPR004605">
    <property type="entry name" value="DNA_helicase_Holl-junc_RuvB"/>
</dbReference>
<dbReference type="InterPro" id="IPR027417">
    <property type="entry name" value="P-loop_NTPase"/>
</dbReference>
<dbReference type="InterPro" id="IPR008824">
    <property type="entry name" value="RuvB-like_N"/>
</dbReference>
<dbReference type="InterPro" id="IPR008823">
    <property type="entry name" value="RuvB_C"/>
</dbReference>
<dbReference type="InterPro" id="IPR036388">
    <property type="entry name" value="WH-like_DNA-bd_sf"/>
</dbReference>
<dbReference type="InterPro" id="IPR036390">
    <property type="entry name" value="WH_DNA-bd_sf"/>
</dbReference>
<dbReference type="NCBIfam" id="NF000868">
    <property type="entry name" value="PRK00080.1"/>
    <property type="match status" value="1"/>
</dbReference>
<dbReference type="NCBIfam" id="TIGR00635">
    <property type="entry name" value="ruvB"/>
    <property type="match status" value="1"/>
</dbReference>
<dbReference type="PANTHER" id="PTHR42848">
    <property type="match status" value="1"/>
</dbReference>
<dbReference type="PANTHER" id="PTHR42848:SF1">
    <property type="entry name" value="HOLLIDAY JUNCTION BRANCH MIGRATION COMPLEX SUBUNIT RUVB"/>
    <property type="match status" value="1"/>
</dbReference>
<dbReference type="Pfam" id="PF17864">
    <property type="entry name" value="AAA_lid_4"/>
    <property type="match status" value="1"/>
</dbReference>
<dbReference type="Pfam" id="PF05491">
    <property type="entry name" value="RuvB_C"/>
    <property type="match status" value="1"/>
</dbReference>
<dbReference type="Pfam" id="PF05496">
    <property type="entry name" value="RuvB_N"/>
    <property type="match status" value="1"/>
</dbReference>
<dbReference type="SMART" id="SM00382">
    <property type="entry name" value="AAA"/>
    <property type="match status" value="1"/>
</dbReference>
<dbReference type="SUPFAM" id="SSF52540">
    <property type="entry name" value="P-loop containing nucleoside triphosphate hydrolases"/>
    <property type="match status" value="1"/>
</dbReference>
<dbReference type="SUPFAM" id="SSF46785">
    <property type="entry name" value="Winged helix' DNA-binding domain"/>
    <property type="match status" value="1"/>
</dbReference>
<keyword id="KW-0067">ATP-binding</keyword>
<keyword id="KW-0963">Cytoplasm</keyword>
<keyword id="KW-0227">DNA damage</keyword>
<keyword id="KW-0233">DNA recombination</keyword>
<keyword id="KW-0234">DNA repair</keyword>
<keyword id="KW-0238">DNA-binding</keyword>
<keyword id="KW-0378">Hydrolase</keyword>
<keyword id="KW-0547">Nucleotide-binding</keyword>
<feature type="chain" id="PRO_1000001499" description="Holliday junction branch migration complex subunit RuvB">
    <location>
        <begin position="1"/>
        <end position="334"/>
    </location>
</feature>
<feature type="region of interest" description="Large ATPase domain (RuvB-L)" evidence="1">
    <location>
        <begin position="4"/>
        <end position="184"/>
    </location>
</feature>
<feature type="region of interest" description="Small ATPAse domain (RuvB-S)" evidence="1">
    <location>
        <begin position="185"/>
        <end position="255"/>
    </location>
</feature>
<feature type="region of interest" description="Head domain (RuvB-H)" evidence="1">
    <location>
        <begin position="258"/>
        <end position="334"/>
    </location>
</feature>
<feature type="binding site" evidence="1">
    <location>
        <position position="23"/>
    </location>
    <ligand>
        <name>ATP</name>
        <dbReference type="ChEBI" id="CHEBI:30616"/>
    </ligand>
</feature>
<feature type="binding site" evidence="1">
    <location>
        <position position="24"/>
    </location>
    <ligand>
        <name>ATP</name>
        <dbReference type="ChEBI" id="CHEBI:30616"/>
    </ligand>
</feature>
<feature type="binding site" evidence="1">
    <location>
        <position position="65"/>
    </location>
    <ligand>
        <name>ATP</name>
        <dbReference type="ChEBI" id="CHEBI:30616"/>
    </ligand>
</feature>
<feature type="binding site" evidence="1">
    <location>
        <position position="68"/>
    </location>
    <ligand>
        <name>ATP</name>
        <dbReference type="ChEBI" id="CHEBI:30616"/>
    </ligand>
</feature>
<feature type="binding site" evidence="1">
    <location>
        <position position="69"/>
    </location>
    <ligand>
        <name>ATP</name>
        <dbReference type="ChEBI" id="CHEBI:30616"/>
    </ligand>
</feature>
<feature type="binding site" evidence="1">
    <location>
        <position position="69"/>
    </location>
    <ligand>
        <name>Mg(2+)</name>
        <dbReference type="ChEBI" id="CHEBI:18420"/>
    </ligand>
</feature>
<feature type="binding site" evidence="1">
    <location>
        <position position="70"/>
    </location>
    <ligand>
        <name>ATP</name>
        <dbReference type="ChEBI" id="CHEBI:30616"/>
    </ligand>
</feature>
<feature type="binding site" evidence="1">
    <location>
        <begin position="131"/>
        <end position="133"/>
    </location>
    <ligand>
        <name>ATP</name>
        <dbReference type="ChEBI" id="CHEBI:30616"/>
    </ligand>
</feature>
<feature type="binding site" evidence="1">
    <location>
        <position position="174"/>
    </location>
    <ligand>
        <name>ATP</name>
        <dbReference type="ChEBI" id="CHEBI:30616"/>
    </ligand>
</feature>
<feature type="binding site" evidence="1">
    <location>
        <position position="184"/>
    </location>
    <ligand>
        <name>ATP</name>
        <dbReference type="ChEBI" id="CHEBI:30616"/>
    </ligand>
</feature>
<feature type="binding site" evidence="1">
    <location>
        <position position="221"/>
    </location>
    <ligand>
        <name>ATP</name>
        <dbReference type="ChEBI" id="CHEBI:30616"/>
    </ligand>
</feature>
<feature type="binding site" evidence="1">
    <location>
        <position position="294"/>
    </location>
    <ligand>
        <name>DNA</name>
        <dbReference type="ChEBI" id="CHEBI:16991"/>
    </ligand>
</feature>
<feature type="binding site" evidence="1">
    <location>
        <position position="313"/>
    </location>
    <ligand>
        <name>DNA</name>
        <dbReference type="ChEBI" id="CHEBI:16991"/>
    </ligand>
</feature>
<feature type="binding site" evidence="1">
    <location>
        <position position="318"/>
    </location>
    <ligand>
        <name>DNA</name>
        <dbReference type="ChEBI" id="CHEBI:16991"/>
    </ligand>
</feature>
<gene>
    <name evidence="1" type="primary">ruvB</name>
    <name type="ordered locus">YE2392</name>
</gene>
<sequence length="334" mass="36950">MIEADRLISAGVISDEESIDRAIRPKLLAEYVGQPHVREQMEIFIQAAKQRGDALDHVLIFGPPGLGKTTLANIVANEMGVNLRTTSGPVLEKAGDLAAMLTNLEPHDVLFIDEIHRLSPVVEEILYPAMEDYQLDIMIGEGPAARSIKLDLPPFTLIGATTRAGSLTSPLRDRFGIVQRLEFYQVADLEHIVSRSAKCLGLELTPEGAHQLARRSRGTPRITNRLLRRVRDFAEVRADGAINGDVAMKALDMLNVDAEGFDFMDRKLLLAVIDKFMGGPVGLDNLAAAIGEERETIEDVLEPYLIQQGFIQRTPRGRIATNHAYKHFGITREE</sequence>
<organism>
    <name type="scientific">Yersinia enterocolitica serotype O:8 / biotype 1B (strain NCTC 13174 / 8081)</name>
    <dbReference type="NCBI Taxonomy" id="393305"/>
    <lineage>
        <taxon>Bacteria</taxon>
        <taxon>Pseudomonadati</taxon>
        <taxon>Pseudomonadota</taxon>
        <taxon>Gammaproteobacteria</taxon>
        <taxon>Enterobacterales</taxon>
        <taxon>Yersiniaceae</taxon>
        <taxon>Yersinia</taxon>
    </lineage>
</organism>
<proteinExistence type="inferred from homology"/>